<comment type="function">
    <text evidence="4 5 6">Negative regulator of photomorphogenesis modulating both light and abscisic acid (ABA) signaling pathways (PubMed:18375596, PubMed:19704523, PubMed:26474641). Negatively regulates the light-mediated inhibition of hypocotyl elongation, probably in a PHYB-mediated signaling pathway, but promotes flowering time (especially in long days) and lateral root formation (PubMed:18375596, PubMed:19704523). Enhances light-regulated gene expression (PubMed:18375596). Promotes COP1-mediated degradation of HY5 during seedling development (e.g. hypocotyl growth) through enhanced ubiquitination in the darkness. Also involved in root gravitropism (PubMed:18375596, PubMed:26474641).</text>
</comment>
<comment type="subunit">
    <text evidence="6">Interacts with HY5 and COP1 in the nucleus.</text>
</comment>
<comment type="subcellular location">
    <subcellularLocation>
        <location evidence="2 4 6">Nucleus membrane</location>
        <topology evidence="1">Multi-pass membrane protein</topology>
    </subcellularLocation>
    <text evidence="4">Constitutively localized in the nucleus of hypocotyl cells.</text>
</comment>
<comment type="alternative products">
    <event type="alternative splicing"/>
    <isoform>
        <id>F4I3V6-1</id>
        <name>1</name>
        <sequence type="displayed"/>
    </isoform>
    <isoform>
        <id>F4I3V6-2</id>
        <name>2</name>
        <sequence type="described" ref="VSP_058839 VSP_058840"/>
    </isoform>
    <text evidence="9">Additional isoforms seem to exist.</text>
</comment>
<comment type="tissue specificity">
    <text evidence="4">Expressed in young seedlings (e.g. hypocotyl and cotyledons) and in green tissues (e.g. leaves, stems, sepals, and young siliques).</text>
</comment>
<comment type="developmental stage">
    <text evidence="4">In seedlings, expressed in hypocotyl and cotyledons up to the fifth day after germination. Levels decrease gradually in hypocotyl to become undetectable in 8 days old seedlings. In cotyledons, repartition becomes later patchy. In adult plants, observed in green tissues, with a gradual decrease during aging leading to patchy distribution. Also detected in seeds still partly green but disappear in dry seeds.</text>
</comment>
<comment type="induction">
    <text>Induced by white light (WL). Barely detectable in dark and in various wavelengths of light such as red light (RL), far red light (FR), and blue light (BL).</text>
</comment>
<comment type="disruption phenotype">
    <text evidence="4 5 6">Short hypocotyl in dark with drastic reduction in apical hook curvature. Enhanced inhibition in hypocotyl elongation in white light (WL), especially at lower fluence rates (PubMed:18375596, PubMed:26474641). Delayed flowering under long-day conditions (PubMed:18375596). Reduced lateral roots formation (PubMed:18375596, PubMed:26474641). Reduced chlorophyll accumulation and expression of light-regulated genes. Increase in the anthocyanin level in the dark (PubMed:18375596). Reduced sensitivity to abscisic acid (ABA) leading to impaired ABA-mediated reduction of seed germination (PubMed:19704523, PubMed:26474641). The double mutant shw1 phyB exhibits a strongly reduced hypocotyl length in WL (PubMed:19704523). The double mutant shw1 cop1 displays an enhanced photomorphogenic growth in the darkness as well as abnormal accumulation of HY5 (PubMed:18375596, PubMed:26474641). The double mutant shw1 hy5 has altered root growth, hypocotyl length and hook angle similar to the single mutant shw1 in the darkness and far red light (FR), but shorter hypocotyl in WL, red light (RL) and blue light (BL). In addition, gravitropic root growth defect observed in hy5 single mutant is suppressed in the double mutant shw1 hy5 (PubMed:26474641).</text>
</comment>
<evidence type="ECO:0000255" key="1"/>
<evidence type="ECO:0000255" key="2">
    <source>
        <dbReference type="PROSITE-ProRule" id="PRU00768"/>
    </source>
</evidence>
<evidence type="ECO:0000256" key="3">
    <source>
        <dbReference type="SAM" id="MobiDB-lite"/>
    </source>
</evidence>
<evidence type="ECO:0000269" key="4">
    <source>
    </source>
</evidence>
<evidence type="ECO:0000269" key="5">
    <source>
    </source>
</evidence>
<evidence type="ECO:0000269" key="6">
    <source>
    </source>
</evidence>
<evidence type="ECO:0000303" key="7">
    <source>
    </source>
</evidence>
<evidence type="ECO:0000305" key="8"/>
<evidence type="ECO:0000312" key="9">
    <source>
        <dbReference type="Araport" id="AT1G69935"/>
    </source>
</evidence>
<sequence>MAAATTTLSSSSSSPSLTLINASHRFVSVTPFSSNSIFLRRRFRRLNRSLASSSSHSRRRYESDDRFFGGGDNYDVVPDDDGFSDDDDEEDERESSVDLLIRFLRSMFKKVSKRTKKASRRILPAAMSPRLVSFAVDGILLLGSLSITRAFLEVICNLGGTVFTVILLIRLFWAAASFFQTYGNSFGPNPVN</sequence>
<organism>
    <name type="scientific">Arabidopsis thaliana</name>
    <name type="common">Mouse-ear cress</name>
    <dbReference type="NCBI Taxonomy" id="3702"/>
    <lineage>
        <taxon>Eukaryota</taxon>
        <taxon>Viridiplantae</taxon>
        <taxon>Streptophyta</taxon>
        <taxon>Embryophyta</taxon>
        <taxon>Tracheophyta</taxon>
        <taxon>Spermatophyta</taxon>
        <taxon>Magnoliopsida</taxon>
        <taxon>eudicotyledons</taxon>
        <taxon>Gunneridae</taxon>
        <taxon>Pentapetalae</taxon>
        <taxon>rosids</taxon>
        <taxon>malvids</taxon>
        <taxon>Brassicales</taxon>
        <taxon>Brassicaceae</taxon>
        <taxon>Camelineae</taxon>
        <taxon>Arabidopsis</taxon>
    </lineage>
</organism>
<feature type="chain" id="PRO_0000439374" description="Protein SHORT HYPOCOTYL IN WHITE LIGHT 1" evidence="1">
    <location>
        <begin position="1"/>
        <end position="192"/>
    </location>
</feature>
<feature type="transmembrane region" description="Helical" evidence="1">
    <location>
        <begin position="122"/>
        <end position="142"/>
    </location>
</feature>
<feature type="transmembrane region" description="Helical" evidence="1">
    <location>
        <begin position="159"/>
        <end position="179"/>
    </location>
</feature>
<feature type="region of interest" description="Disordered" evidence="3">
    <location>
        <begin position="70"/>
        <end position="92"/>
    </location>
</feature>
<feature type="short sequence motif" description="Nuclear localization signal" evidence="2">
    <location>
        <begin position="43"/>
        <end position="50"/>
    </location>
</feature>
<feature type="compositionally biased region" description="Acidic residues" evidence="3">
    <location>
        <begin position="77"/>
        <end position="92"/>
    </location>
</feature>
<feature type="splice variant" id="VSP_058839" description="In isoform 2.">
    <original>SRRRYESDDRFFGGGDNYDVVPDDDGFSDDDDEEDERESSVDLLIRFLRSMFKKVSKRTKKASRRILPAA</original>
    <variation>VRSDYLLLIELCNPNPNPNLLNLFILSRVGDTNQTIDSSAVVTITMLFPMTTDLATMMMKKTKEKAVSIF</variation>
    <location>
        <begin position="57"/>
        <end position="126"/>
    </location>
</feature>
<feature type="splice variant" id="VSP_058840" description="In isoform 2.">
    <location>
        <begin position="127"/>
        <end position="192"/>
    </location>
</feature>
<feature type="sequence conflict" description="In Ref. 1; CAL91513 and 5; AAM60951." evidence="8" ref="1 5">
    <original>T</original>
    <variation>A</variation>
    <location>
        <position position="115"/>
    </location>
</feature>
<name>SHW1_ARATH</name>
<accession>F4I3V6</accession>
<accession>Q0WTQ6</accession>
<accession>Q8LGA9</accession>
<proteinExistence type="evidence at protein level"/>
<reference key="1">
    <citation type="journal article" date="2008" name="Plant Physiol.">
        <title>SHORT HYPOCOTYL IN WHITE LIGHT1, a serine-arginine-aspartate-rich protein in Arabidopsis, acts as a negative regulator of photomorphogenic growth.</title>
        <authorList>
            <person name="Bhatia S."/>
            <person name="Gangappa S.N."/>
            <person name="Kushwaha R."/>
            <person name="Kundu S."/>
            <person name="Chattopadhyay S."/>
        </authorList>
    </citation>
    <scope>NUCLEOTIDE SEQUENCE [MRNA] (ISOFORM 1)</scope>
    <scope>FUNCTION</scope>
    <scope>DISRUPTION PHENOTYPE</scope>
    <scope>SUBCELLULAR LOCATION</scope>
    <scope>TISSUE SPECIFICITY</scope>
    <scope>DEVELOPMENTAL STAGE</scope>
    <scope>INDUCTION BY WHITE LIGHT</scope>
    <source>
        <strain>cv. Columbia</strain>
    </source>
</reference>
<reference key="2">
    <citation type="journal article" date="2000" name="Nature">
        <title>Sequence and analysis of chromosome 1 of the plant Arabidopsis thaliana.</title>
        <authorList>
            <person name="Theologis A."/>
            <person name="Ecker J.R."/>
            <person name="Palm C.J."/>
            <person name="Federspiel N.A."/>
            <person name="Kaul S."/>
            <person name="White O."/>
            <person name="Alonso J."/>
            <person name="Altafi H."/>
            <person name="Araujo R."/>
            <person name="Bowman C.L."/>
            <person name="Brooks S.Y."/>
            <person name="Buehler E."/>
            <person name="Chan A."/>
            <person name="Chao Q."/>
            <person name="Chen H."/>
            <person name="Cheuk R.F."/>
            <person name="Chin C.W."/>
            <person name="Chung M.K."/>
            <person name="Conn L."/>
            <person name="Conway A.B."/>
            <person name="Conway A.R."/>
            <person name="Creasy T.H."/>
            <person name="Dewar K."/>
            <person name="Dunn P."/>
            <person name="Etgu P."/>
            <person name="Feldblyum T.V."/>
            <person name="Feng J.-D."/>
            <person name="Fong B."/>
            <person name="Fujii C.Y."/>
            <person name="Gill J.E."/>
            <person name="Goldsmith A.D."/>
            <person name="Haas B."/>
            <person name="Hansen N.F."/>
            <person name="Hughes B."/>
            <person name="Huizar L."/>
            <person name="Hunter J.L."/>
            <person name="Jenkins J."/>
            <person name="Johnson-Hopson C."/>
            <person name="Khan S."/>
            <person name="Khaykin E."/>
            <person name="Kim C.J."/>
            <person name="Koo H.L."/>
            <person name="Kremenetskaia I."/>
            <person name="Kurtz D.B."/>
            <person name="Kwan A."/>
            <person name="Lam B."/>
            <person name="Langin-Hooper S."/>
            <person name="Lee A."/>
            <person name="Lee J.M."/>
            <person name="Lenz C.A."/>
            <person name="Li J.H."/>
            <person name="Li Y.-P."/>
            <person name="Lin X."/>
            <person name="Liu S.X."/>
            <person name="Liu Z.A."/>
            <person name="Luros J.S."/>
            <person name="Maiti R."/>
            <person name="Marziali A."/>
            <person name="Militscher J."/>
            <person name="Miranda M."/>
            <person name="Nguyen M."/>
            <person name="Nierman W.C."/>
            <person name="Osborne B.I."/>
            <person name="Pai G."/>
            <person name="Peterson J."/>
            <person name="Pham P.K."/>
            <person name="Rizzo M."/>
            <person name="Rooney T."/>
            <person name="Rowley D."/>
            <person name="Sakano H."/>
            <person name="Salzberg S.L."/>
            <person name="Schwartz J.R."/>
            <person name="Shinn P."/>
            <person name="Southwick A.M."/>
            <person name="Sun H."/>
            <person name="Tallon L.J."/>
            <person name="Tambunga G."/>
            <person name="Toriumi M.J."/>
            <person name="Town C.D."/>
            <person name="Utterback T."/>
            <person name="Van Aken S."/>
            <person name="Vaysberg M."/>
            <person name="Vysotskaia V.S."/>
            <person name="Walker M."/>
            <person name="Wu D."/>
            <person name="Yu G."/>
            <person name="Fraser C.M."/>
            <person name="Venter J.C."/>
            <person name="Davis R.W."/>
        </authorList>
    </citation>
    <scope>NUCLEOTIDE SEQUENCE [LARGE SCALE GENOMIC DNA]</scope>
    <source>
        <strain>cv. Columbia</strain>
    </source>
</reference>
<reference key="3">
    <citation type="journal article" date="2017" name="Plant J.">
        <title>Araport11: a complete reannotation of the Arabidopsis thaliana reference genome.</title>
        <authorList>
            <person name="Cheng C.Y."/>
            <person name="Krishnakumar V."/>
            <person name="Chan A.P."/>
            <person name="Thibaud-Nissen F."/>
            <person name="Schobel S."/>
            <person name="Town C.D."/>
        </authorList>
    </citation>
    <scope>GENOME REANNOTATION</scope>
    <source>
        <strain>cv. Columbia</strain>
    </source>
</reference>
<reference key="4">
    <citation type="submission" date="2006-07" db="EMBL/GenBank/DDBJ databases">
        <title>Large-scale analysis of RIKEN Arabidopsis full-length (RAFL) cDNAs.</title>
        <authorList>
            <person name="Totoki Y."/>
            <person name="Seki M."/>
            <person name="Ishida J."/>
            <person name="Nakajima M."/>
            <person name="Enju A."/>
            <person name="Kamiya A."/>
            <person name="Narusaka M."/>
            <person name="Shin-i T."/>
            <person name="Nakagawa M."/>
            <person name="Sakamoto N."/>
            <person name="Oishi K."/>
            <person name="Kohara Y."/>
            <person name="Kobayashi M."/>
            <person name="Toyoda A."/>
            <person name="Sakaki Y."/>
            <person name="Sakurai T."/>
            <person name="Iida K."/>
            <person name="Akiyama K."/>
            <person name="Satou M."/>
            <person name="Toyoda T."/>
            <person name="Konagaya A."/>
            <person name="Carninci P."/>
            <person name="Kawai J."/>
            <person name="Hayashizaki Y."/>
            <person name="Shinozaki K."/>
        </authorList>
    </citation>
    <scope>NUCLEOTIDE SEQUENCE [LARGE SCALE MRNA] (ISOFORM 2)</scope>
    <source>
        <strain>cv. Columbia</strain>
    </source>
</reference>
<reference key="5">
    <citation type="submission" date="2002-03" db="EMBL/GenBank/DDBJ databases">
        <title>Full-length cDNA from Arabidopsis thaliana.</title>
        <authorList>
            <person name="Brover V.V."/>
            <person name="Troukhan M.E."/>
            <person name="Alexandrov N.A."/>
            <person name="Lu Y.-P."/>
            <person name="Flavell R.B."/>
            <person name="Feldmann K.A."/>
        </authorList>
    </citation>
    <scope>NUCLEOTIDE SEQUENCE [LARGE SCALE MRNA] (ISOFORM 1)</scope>
</reference>
<reference key="6">
    <citation type="journal article" date="2008" name="Plant Signal. Behav.">
        <title>SHW1, a common regulator of abscisic acid (ABA) and light signaling pathways.</title>
        <authorList>
            <person name="Bhatia S."/>
            <person name="Gangappa S.N."/>
            <person name="Chattopadhyay S."/>
        </authorList>
    </citation>
    <scope>FUNCTION</scope>
    <source>
        <strain>cv. Columbia</strain>
    </source>
</reference>
<reference key="7">
    <citation type="journal article" date="2015" name="Plant Physiol.">
        <title>SHORT HYPOCOTYL IN WHITE LIGHT1 interacts with ELONGATED HYPOCOTYL5 (HY5) and CONSTITUTIVE PHOTOMORPHOGENIC1 (COP1) and promotes COP1-mediated degradation of HY5 during Arabidopsis seedling development.</title>
        <authorList>
            <person name="Srivastava A.K."/>
            <person name="Senapati D."/>
            <person name="Srivastava A."/>
            <person name="Chakraborty M."/>
            <person name="Gangappa S.N."/>
            <person name="Chattopadhyay S."/>
        </authorList>
    </citation>
    <scope>FUNCTION</scope>
    <scope>DISRUPTION PHENOTYPE</scope>
    <scope>INTERACTION WITH HY5 AND COP1</scope>
    <scope>SUBCELLULAR LOCATION</scope>
    <source>
        <strain>cv. Columbia</strain>
    </source>
</reference>
<protein>
    <recommendedName>
        <fullName evidence="7">Protein SHORT HYPOCOTYL IN WHITE LIGHT 1</fullName>
    </recommendedName>
</protein>
<gene>
    <name evidence="7" type="primary">SHW1</name>
    <name evidence="9" type="ordered locus">At1g69935</name>
    <name evidence="8" type="ORF">T17F3</name>
</gene>
<dbReference type="EMBL" id="AM419013">
    <property type="protein sequence ID" value="CAL91513.1"/>
    <property type="molecule type" value="mRNA"/>
</dbReference>
<dbReference type="EMBL" id="AC010675">
    <property type="status" value="NOT_ANNOTATED_CDS"/>
    <property type="molecule type" value="Genomic_DNA"/>
</dbReference>
<dbReference type="EMBL" id="CP002684">
    <property type="protein sequence ID" value="AEE35000.1"/>
    <property type="molecule type" value="Genomic_DNA"/>
</dbReference>
<dbReference type="EMBL" id="AK227492">
    <property type="protein sequence ID" value="BAE99492.1"/>
    <property type="molecule type" value="mRNA"/>
</dbReference>
<dbReference type="EMBL" id="AY084370">
    <property type="protein sequence ID" value="AAM60951.1"/>
    <property type="molecule type" value="mRNA"/>
</dbReference>
<dbReference type="RefSeq" id="NP_564981.1">
    <molecule id="F4I3V6-1"/>
    <property type="nucleotide sequence ID" value="NM_105662.2"/>
</dbReference>
<dbReference type="FunCoup" id="F4I3V6">
    <property type="interactions" value="30"/>
</dbReference>
<dbReference type="STRING" id="3702.F4I3V6"/>
<dbReference type="iPTMnet" id="F4I3V6"/>
<dbReference type="PaxDb" id="3702-AT1G69935.1"/>
<dbReference type="ProteomicsDB" id="234505">
    <molecule id="F4I3V6-1"/>
</dbReference>
<dbReference type="EnsemblPlants" id="AT1G69935.1">
    <molecule id="F4I3V6-1"/>
    <property type="protein sequence ID" value="AT1G69935.1"/>
    <property type="gene ID" value="AT1G69935"/>
</dbReference>
<dbReference type="GeneID" id="843330"/>
<dbReference type="Gramene" id="AT1G69935.1">
    <molecule id="F4I3V6-1"/>
    <property type="protein sequence ID" value="AT1G69935.1"/>
    <property type="gene ID" value="AT1G69935"/>
</dbReference>
<dbReference type="KEGG" id="ath:AT1G69935"/>
<dbReference type="Araport" id="AT1G69935"/>
<dbReference type="TAIR" id="AT1G69935">
    <property type="gene designation" value="SHW1"/>
</dbReference>
<dbReference type="eggNOG" id="ENOG502S0GF">
    <property type="taxonomic scope" value="Eukaryota"/>
</dbReference>
<dbReference type="HOGENOM" id="CLU_082534_0_0_1"/>
<dbReference type="InParanoid" id="F4I3V6"/>
<dbReference type="OMA" id="WTGASFF"/>
<dbReference type="PRO" id="PR:F4I3V6"/>
<dbReference type="Proteomes" id="UP000006548">
    <property type="component" value="Chromosome 1"/>
</dbReference>
<dbReference type="ExpressionAtlas" id="F4I3V6">
    <property type="expression patterns" value="baseline and differential"/>
</dbReference>
<dbReference type="GO" id="GO:0031965">
    <property type="term" value="C:nuclear membrane"/>
    <property type="evidence" value="ECO:0007669"/>
    <property type="project" value="UniProtKB-SubCell"/>
</dbReference>
<dbReference type="GO" id="GO:0005634">
    <property type="term" value="C:nucleus"/>
    <property type="evidence" value="ECO:0000314"/>
    <property type="project" value="UniProtKB"/>
</dbReference>
<dbReference type="GO" id="GO:0009738">
    <property type="term" value="P:abscisic acid-activated signaling pathway"/>
    <property type="evidence" value="ECO:0007669"/>
    <property type="project" value="UniProtKB-KW"/>
</dbReference>
<dbReference type="GO" id="GO:0009908">
    <property type="term" value="P:flower development"/>
    <property type="evidence" value="ECO:0007669"/>
    <property type="project" value="UniProtKB-KW"/>
</dbReference>
<dbReference type="GO" id="GO:0010100">
    <property type="term" value="P:negative regulation of photomorphogenesis"/>
    <property type="evidence" value="ECO:0000315"/>
    <property type="project" value="UniProtKB"/>
</dbReference>
<dbReference type="GO" id="GO:0009958">
    <property type="term" value="P:positive gravitropism"/>
    <property type="evidence" value="ECO:0000315"/>
    <property type="project" value="UniProtKB"/>
</dbReference>
<dbReference type="GO" id="GO:1901333">
    <property type="term" value="P:positive regulation of lateral root development"/>
    <property type="evidence" value="ECO:0000315"/>
    <property type="project" value="UniProtKB"/>
</dbReference>
<dbReference type="GO" id="GO:0048578">
    <property type="term" value="P:positive regulation of long-day photoperiodism, flowering"/>
    <property type="evidence" value="ECO:0000315"/>
    <property type="project" value="UniProtKB"/>
</dbReference>
<dbReference type="GO" id="GO:0009787">
    <property type="term" value="P:regulation of abscisic acid-activated signaling pathway"/>
    <property type="evidence" value="ECO:0000315"/>
    <property type="project" value="UniProtKB"/>
</dbReference>
<dbReference type="GO" id="GO:0031540">
    <property type="term" value="P:regulation of anthocyanin biosynthetic process"/>
    <property type="evidence" value="ECO:0000315"/>
    <property type="project" value="UniProtKB"/>
</dbReference>
<dbReference type="GO" id="GO:0010380">
    <property type="term" value="P:regulation of chlorophyll biosynthetic process"/>
    <property type="evidence" value="ECO:0000315"/>
    <property type="project" value="UniProtKB"/>
</dbReference>
<dbReference type="GO" id="GO:0090227">
    <property type="term" value="P:regulation of red or far-red light signaling pathway"/>
    <property type="evidence" value="ECO:0000315"/>
    <property type="project" value="UniProtKB"/>
</dbReference>
<dbReference type="GO" id="GO:0009642">
    <property type="term" value="P:response to light intensity"/>
    <property type="evidence" value="ECO:0000315"/>
    <property type="project" value="UniProtKB"/>
</dbReference>
<dbReference type="GO" id="GO:0009416">
    <property type="term" value="P:response to light stimulus"/>
    <property type="evidence" value="ECO:0000315"/>
    <property type="project" value="UniProtKB"/>
</dbReference>
<dbReference type="InterPro" id="IPR039324">
    <property type="entry name" value="SHW1"/>
</dbReference>
<dbReference type="PANTHER" id="PTHR35474">
    <property type="entry name" value="ATP PHOSPHORIBOSYLTRANSFERASE REGULATORY SUBUNIT"/>
    <property type="match status" value="1"/>
</dbReference>
<dbReference type="PANTHER" id="PTHR35474:SF3">
    <property type="entry name" value="PROTEIN SHORT HYPOCOTYL IN WHITE LIGHT 1"/>
    <property type="match status" value="1"/>
</dbReference>
<keyword id="KW-0938">Abscisic acid signaling pathway</keyword>
<keyword id="KW-0025">Alternative splicing</keyword>
<keyword id="KW-0287">Flowering</keyword>
<keyword id="KW-0472">Membrane</keyword>
<keyword id="KW-0539">Nucleus</keyword>
<keyword id="KW-1185">Reference proteome</keyword>
<keyword id="KW-0812">Transmembrane</keyword>
<keyword id="KW-1133">Transmembrane helix</keyword>